<sequence>MNDSCSWDQLWDQQGTLNEYTGKGIDLLERIMAYSKERASIELEYSSKLKALSKKTAMKMKSESELWNSVSYVKGFHDVIAGIVPVATQHELIAENLKSAVIPFTTQKIAEYRVAKKQLESDNSNLGKQLRMVIDEMAKSHKEYVKCYKETEAAMLKYAKAEKNMDISRLELEKTKNNYQQKCGMLEESKQTYAVMTTKANEEQSAHYDRKLPQLLDNYKKLHTNRILDTVEILSKCVEAESCVNQIIASCHNDMRRDIGLIDPSRDANLVVENMKSGHPVPQPFVFEDLGHPQDRSSFMGGGASGPAGSMDGMDATMKKGGTLMSKNGKGVARKQSMHQKFFGGGTADKKTDSGDYGTLPPQQRARKIAGKISDLEKEKDRATQSREGVSKMQAAYRENPKLGNPSDCDAQLAQYGHEIDALSNQIQKFKILLDDVNAQLGAGGLSATSVGGSDTPPSIRSVSSASSGVTSRVNTINDAHRTNGGVGGGRRESFSGSNGGSDTDPTINGNGHGRDELYEECSNPNPVLGEAIAQFAFDGAQDGTIRMEANEKLWLIEKDEGDGWTRVRKENNSADGFVPSSYLKVTWFGKV</sequence>
<reference evidence="11" key="1">
    <citation type="journal article" date="1998" name="Science">
        <title>Genome sequence of the nematode C. elegans: a platform for investigating biology.</title>
        <authorList>
            <consortium name="The C. elegans sequencing consortium"/>
        </authorList>
    </citation>
    <scope>NUCLEOTIDE SEQUENCE [LARGE SCALE GENOMIC DNA]</scope>
    <source>
        <strain evidence="11">Bristol N2</strain>
    </source>
</reference>
<reference evidence="10" key="2">
    <citation type="journal article" date="2009" name="PLoS Genet.">
        <title>Requirements for F-BAR proteins TOCA-1 and TOCA-2 in actin dynamics and membrane trafficking during Caenorhabditis elegans oocyte growth and embryonic epidermal morphogenesis.</title>
        <authorList>
            <person name="Giuliani C."/>
            <person name="Troglio F."/>
            <person name="Bai Z."/>
            <person name="Patel F.B."/>
            <person name="Zucconi A."/>
            <person name="Malabarba M.G."/>
            <person name="Disanza A."/>
            <person name="Stradal T.B."/>
            <person name="Cassata G."/>
            <person name="Confalonieri S."/>
            <person name="Hardin J.D."/>
            <person name="Soto M.C."/>
            <person name="Grant B.D."/>
            <person name="Scita G."/>
        </authorList>
    </citation>
    <scope>FUNCTION</scope>
    <scope>INTERACTION WITH WSP-1</scope>
    <scope>SUBCELLULAR LOCATION</scope>
    <scope>TISSUE SPECIFICITY</scope>
    <scope>DEVELOPMENTAL STAGE</scope>
    <scope>DISRUPTION PHENOTYPE</scope>
</reference>
<reference evidence="10" key="3">
    <citation type="journal article" date="2013" name="Genetics">
        <title>toca-1 is in a novel pathway that functions in parallel with a SUN-KASH nuclear envelope bridge to move nuclei in Caenorhabditis elegans.</title>
        <authorList>
            <person name="Chang Y.T."/>
            <person name="Dranow D."/>
            <person name="Kuhn J."/>
            <person name="Meyerzon M."/>
            <person name="Ngo M."/>
            <person name="Ratner D."/>
            <person name="Warltier K."/>
            <person name="Starr D.A."/>
        </authorList>
    </citation>
    <scope>FUNCTION</scope>
    <scope>SUBCELLULAR LOCATION</scope>
    <scope>DISRUPTION PHENOTYPE</scope>
    <scope>MUTAGENESIS OF ALA-100</scope>
</reference>
<reference evidence="10" key="4">
    <citation type="journal article" date="2016" name="J. Mol. Cell Biol.">
        <title>Spatial control of active CDC-42 during collective migration of hypodermal cells in Caenorhabditis elegans.</title>
        <authorList>
            <person name="Ouellette M.H."/>
            <person name="Martin E."/>
            <person name="Lacoste-Caron G."/>
            <person name="Hamiche K."/>
            <person name="Jenna S."/>
        </authorList>
    </citation>
    <scope>FUNCTION</scope>
    <scope>DISRUPTION PHENOTYPE</scope>
</reference>
<reference evidence="10" key="5">
    <citation type="journal article" date="2015" name="Proc. Natl. Acad. Sci. U.S.A.">
        <title>A TOCA/CDC-42/PAR/WAVE functional module required for retrograde endocytic recycling.</title>
        <authorList>
            <person name="Bai Z."/>
            <person name="Grant B.D."/>
        </authorList>
    </citation>
    <scope>FUNCTION</scope>
    <scope>INTERACTION WITH CDC-42 AND WVE-1</scope>
    <scope>SUBCELLULAR LOCATION</scope>
    <scope>DISRUPTION PHENOTYPE</scope>
</reference>
<feature type="chain" id="PRO_0000437443" description="Transducer of Cdc42-dependent actin assembly protein 1 homolog" evidence="10">
    <location>
        <begin position="1"/>
        <end position="592"/>
    </location>
</feature>
<feature type="domain" description="F-BAR" evidence="3">
    <location>
        <begin position="3"/>
        <end position="267"/>
    </location>
</feature>
<feature type="domain" description="REM-1" evidence="4">
    <location>
        <begin position="359"/>
        <end position="436"/>
    </location>
</feature>
<feature type="domain" description="SH3" evidence="2">
    <location>
        <begin position="527"/>
        <end position="589"/>
    </location>
</feature>
<feature type="region of interest" description="Disordered" evidence="5">
    <location>
        <begin position="343"/>
        <end position="366"/>
    </location>
</feature>
<feature type="region of interest" description="Disordered" evidence="5">
    <location>
        <begin position="447"/>
        <end position="519"/>
    </location>
</feature>
<feature type="coiled-coil region" evidence="1">
    <location>
        <begin position="363"/>
        <end position="441"/>
    </location>
</feature>
<feature type="compositionally biased region" description="Polar residues" evidence="5">
    <location>
        <begin position="447"/>
        <end position="457"/>
    </location>
</feature>
<feature type="compositionally biased region" description="Low complexity" evidence="5">
    <location>
        <begin position="459"/>
        <end position="474"/>
    </location>
</feature>
<feature type="compositionally biased region" description="Polar residues" evidence="5">
    <location>
        <begin position="495"/>
        <end position="510"/>
    </location>
</feature>
<feature type="mutagenesis site" description="In yc20; enhances the hypodermal P-cell nuclear migration defect in unc-84 mutants." evidence="7">
    <original>A</original>
    <variation>V</variation>
    <location>
        <position position="100"/>
    </location>
</feature>
<dbReference type="EMBL" id="BX284606">
    <property type="protein sequence ID" value="CCD68288.1"/>
    <property type="molecule type" value="Genomic_DNA"/>
</dbReference>
<dbReference type="EMBL" id="BX284606">
    <property type="protein sequence ID" value="CCD68289.1"/>
    <property type="molecule type" value="Genomic_DNA"/>
</dbReference>
<dbReference type="PIR" id="T15992">
    <property type="entry name" value="T15992"/>
</dbReference>
<dbReference type="RefSeq" id="NP_741722.1">
    <property type="nucleotide sequence ID" value="NM_171630.6"/>
</dbReference>
<dbReference type="RefSeq" id="NP_741723.1">
    <property type="nucleotide sequence ID" value="NM_171940.8"/>
</dbReference>
<dbReference type="SMR" id="Q19253"/>
<dbReference type="FunCoup" id="Q19253">
    <property type="interactions" value="2239"/>
</dbReference>
<dbReference type="IntAct" id="Q19253">
    <property type="interactions" value="29"/>
</dbReference>
<dbReference type="STRING" id="6239.F09E10.8a.1"/>
<dbReference type="PaxDb" id="6239-F09E10.8a"/>
<dbReference type="PeptideAtlas" id="Q19253"/>
<dbReference type="EnsemblMetazoa" id="F09E10.8.1">
    <property type="protein sequence ID" value="F09E10.8.1"/>
    <property type="gene ID" value="WBGene00017298"/>
</dbReference>
<dbReference type="GeneID" id="180492"/>
<dbReference type="KEGG" id="cel:CELE_F09E10.8"/>
<dbReference type="UCSC" id="F09E10.8a">
    <property type="organism name" value="c. elegans"/>
</dbReference>
<dbReference type="AGR" id="WB:WBGene00017298"/>
<dbReference type="CTD" id="180492"/>
<dbReference type="WormBase" id="F09E10.8">
    <property type="protein sequence ID" value="CE27939"/>
    <property type="gene ID" value="WBGene00017298"/>
    <property type="gene designation" value="toca-1"/>
</dbReference>
<dbReference type="eggNOG" id="KOG3565">
    <property type="taxonomic scope" value="Eukaryota"/>
</dbReference>
<dbReference type="GeneTree" id="ENSGT00950000183047"/>
<dbReference type="InParanoid" id="Q19253"/>
<dbReference type="OMA" id="YADGWWE"/>
<dbReference type="OrthoDB" id="8783038at2759"/>
<dbReference type="PhylomeDB" id="Q19253"/>
<dbReference type="Reactome" id="R-CEL-8856828">
    <property type="pathway name" value="Clathrin-mediated endocytosis"/>
</dbReference>
<dbReference type="Reactome" id="R-CEL-9013406">
    <property type="pathway name" value="RHOQ GTPase cycle"/>
</dbReference>
<dbReference type="PRO" id="PR:Q19253"/>
<dbReference type="Proteomes" id="UP000001940">
    <property type="component" value="Chromosome X"/>
</dbReference>
<dbReference type="Bgee" id="WBGene00017298">
    <property type="expression patterns" value="Expressed in pharyngeal muscle cell (C elegans) and 3 other cell types or tissues"/>
</dbReference>
<dbReference type="GO" id="GO:0016324">
    <property type="term" value="C:apical plasma membrane"/>
    <property type="evidence" value="ECO:0007669"/>
    <property type="project" value="UniProtKB-SubCell"/>
</dbReference>
<dbReference type="GO" id="GO:0016323">
    <property type="term" value="C:basolateral plasma membrane"/>
    <property type="evidence" value="ECO:0007669"/>
    <property type="project" value="UniProtKB-SubCell"/>
</dbReference>
<dbReference type="GO" id="GO:0005911">
    <property type="term" value="C:cell-cell junction"/>
    <property type="evidence" value="ECO:0000314"/>
    <property type="project" value="UniProtKB"/>
</dbReference>
<dbReference type="GO" id="GO:0097708">
    <property type="term" value="C:intracellular vesicle"/>
    <property type="evidence" value="ECO:0000314"/>
    <property type="project" value="UniProtKB"/>
</dbReference>
<dbReference type="GO" id="GO:0048471">
    <property type="term" value="C:perinuclear region of cytoplasm"/>
    <property type="evidence" value="ECO:0007669"/>
    <property type="project" value="UniProtKB-SubCell"/>
</dbReference>
<dbReference type="GO" id="GO:0005886">
    <property type="term" value="C:plasma membrane"/>
    <property type="evidence" value="ECO:0000314"/>
    <property type="project" value="UniProtKB"/>
</dbReference>
<dbReference type="GO" id="GO:0055037">
    <property type="term" value="C:recycling endosome"/>
    <property type="evidence" value="ECO:0007669"/>
    <property type="project" value="UniProtKB-SubCell"/>
</dbReference>
<dbReference type="GO" id="GO:0048613">
    <property type="term" value="P:embryonic ectodermal digestive tract morphogenesis"/>
    <property type="evidence" value="ECO:0000315"/>
    <property type="project" value="UniProtKB"/>
</dbReference>
<dbReference type="GO" id="GO:0006897">
    <property type="term" value="P:endocytosis"/>
    <property type="evidence" value="ECO:0007669"/>
    <property type="project" value="UniProtKB-KW"/>
</dbReference>
<dbReference type="GO" id="GO:1904703">
    <property type="term" value="P:negative regulation of protein localization to adherens junction"/>
    <property type="evidence" value="ECO:0000316"/>
    <property type="project" value="UniProtKB"/>
</dbReference>
<dbReference type="GO" id="GO:2000370">
    <property type="term" value="P:positive regulation of clathrin-dependent endocytosis"/>
    <property type="evidence" value="ECO:0000315"/>
    <property type="project" value="UniProtKB"/>
</dbReference>
<dbReference type="GO" id="GO:1901046">
    <property type="term" value="P:positive regulation of egg-laying behavior"/>
    <property type="evidence" value="ECO:0000316"/>
    <property type="project" value="UniProtKB"/>
</dbReference>
<dbReference type="GO" id="GO:0032956">
    <property type="term" value="P:regulation of actin cytoskeleton organization"/>
    <property type="evidence" value="ECO:0000316"/>
    <property type="project" value="UniProtKB"/>
</dbReference>
<dbReference type="GO" id="GO:0007165">
    <property type="term" value="P:signal transduction"/>
    <property type="evidence" value="ECO:0007669"/>
    <property type="project" value="InterPro"/>
</dbReference>
<dbReference type="CDD" id="cd07653">
    <property type="entry name" value="F-BAR_CIP4-like"/>
    <property type="match status" value="1"/>
</dbReference>
<dbReference type="CDD" id="cd11619">
    <property type="entry name" value="HR1_CIP4-like"/>
    <property type="match status" value="1"/>
</dbReference>
<dbReference type="CDD" id="cd11911">
    <property type="entry name" value="SH3_CIP4-like"/>
    <property type="match status" value="1"/>
</dbReference>
<dbReference type="FunFam" id="1.20.1270.60:FF:000060">
    <property type="entry name" value="Actin polymerization protein Bzz1"/>
    <property type="match status" value="1"/>
</dbReference>
<dbReference type="FunFam" id="2.30.30.40:FF:000203">
    <property type="entry name" value="Cdc42-interacting protein 4, isoform F"/>
    <property type="match status" value="1"/>
</dbReference>
<dbReference type="Gene3D" id="6.10.140.470">
    <property type="match status" value="1"/>
</dbReference>
<dbReference type="Gene3D" id="1.20.1270.60">
    <property type="entry name" value="Arfaptin homology (AH) domain/BAR domain"/>
    <property type="match status" value="1"/>
</dbReference>
<dbReference type="Gene3D" id="2.30.30.40">
    <property type="entry name" value="SH3 Domains"/>
    <property type="match status" value="1"/>
</dbReference>
<dbReference type="InterPro" id="IPR027267">
    <property type="entry name" value="AH/BAR_dom_sf"/>
</dbReference>
<dbReference type="InterPro" id="IPR031160">
    <property type="entry name" value="F_BAR"/>
</dbReference>
<dbReference type="InterPro" id="IPR001060">
    <property type="entry name" value="FCH_dom"/>
</dbReference>
<dbReference type="InterPro" id="IPR011072">
    <property type="entry name" value="HR1_rho-bd"/>
</dbReference>
<dbReference type="InterPro" id="IPR036028">
    <property type="entry name" value="SH3-like_dom_sf"/>
</dbReference>
<dbReference type="InterPro" id="IPR001452">
    <property type="entry name" value="SH3_domain"/>
</dbReference>
<dbReference type="PANTHER" id="PTHR15735:SF12">
    <property type="entry name" value="CDC42-INTERACTING PROTEIN 4, ISOFORM B"/>
    <property type="match status" value="1"/>
</dbReference>
<dbReference type="PANTHER" id="PTHR15735">
    <property type="entry name" value="FCH AND DOUBLE SH3 DOMAINS PROTEIN"/>
    <property type="match status" value="1"/>
</dbReference>
<dbReference type="Pfam" id="PF00611">
    <property type="entry name" value="FCH"/>
    <property type="match status" value="1"/>
</dbReference>
<dbReference type="Pfam" id="PF00018">
    <property type="entry name" value="SH3_1"/>
    <property type="match status" value="1"/>
</dbReference>
<dbReference type="SMART" id="SM00055">
    <property type="entry name" value="FCH"/>
    <property type="match status" value="1"/>
</dbReference>
<dbReference type="SMART" id="SM00326">
    <property type="entry name" value="SH3"/>
    <property type="match status" value="1"/>
</dbReference>
<dbReference type="SUPFAM" id="SSF103657">
    <property type="entry name" value="BAR/IMD domain-like"/>
    <property type="match status" value="1"/>
</dbReference>
<dbReference type="SUPFAM" id="SSF50044">
    <property type="entry name" value="SH3-domain"/>
    <property type="match status" value="1"/>
</dbReference>
<dbReference type="PROSITE" id="PS51741">
    <property type="entry name" value="F_BAR"/>
    <property type="match status" value="1"/>
</dbReference>
<dbReference type="PROSITE" id="PS51860">
    <property type="entry name" value="REM_1"/>
    <property type="match status" value="1"/>
</dbReference>
<dbReference type="PROSITE" id="PS50002">
    <property type="entry name" value="SH3"/>
    <property type="match status" value="1"/>
</dbReference>
<name>TOCA1_CAEEL</name>
<keyword id="KW-0965">Cell junction</keyword>
<keyword id="KW-1003">Cell membrane</keyword>
<keyword id="KW-0175">Coiled coil</keyword>
<keyword id="KW-0963">Cytoplasm</keyword>
<keyword id="KW-0968">Cytoplasmic vesicle</keyword>
<keyword id="KW-0254">Endocytosis</keyword>
<keyword id="KW-0967">Endosome</keyword>
<keyword id="KW-0472">Membrane</keyword>
<keyword id="KW-1185">Reference proteome</keyword>
<keyword id="KW-0728">SH3 domain</keyword>
<organism evidence="11">
    <name type="scientific">Caenorhabditis elegans</name>
    <dbReference type="NCBI Taxonomy" id="6239"/>
    <lineage>
        <taxon>Eukaryota</taxon>
        <taxon>Metazoa</taxon>
        <taxon>Ecdysozoa</taxon>
        <taxon>Nematoda</taxon>
        <taxon>Chromadorea</taxon>
        <taxon>Rhabditida</taxon>
        <taxon>Rhabditina</taxon>
        <taxon>Rhabditomorpha</taxon>
        <taxon>Rhabditoidea</taxon>
        <taxon>Rhabditidae</taxon>
        <taxon>Peloderinae</taxon>
        <taxon>Caenorhabditis</taxon>
    </lineage>
</organism>
<gene>
    <name evidence="12" type="primary">toca-1</name>
    <name evidence="12" type="ORF">F09E10.8</name>
</gene>
<accession>Q19253</accession>
<accession>Q8MQ82</accession>
<proteinExistence type="evidence at protein level"/>
<protein>
    <recommendedName>
        <fullName evidence="10">Transducer of Cdc42-dependent actin assembly protein 1 homolog</fullName>
    </recommendedName>
</protein>
<evidence type="ECO:0000255" key="1"/>
<evidence type="ECO:0000255" key="2">
    <source>
        <dbReference type="PROSITE-ProRule" id="PRU00192"/>
    </source>
</evidence>
<evidence type="ECO:0000255" key="3">
    <source>
        <dbReference type="PROSITE-ProRule" id="PRU01077"/>
    </source>
</evidence>
<evidence type="ECO:0000255" key="4">
    <source>
        <dbReference type="PROSITE-ProRule" id="PRU01207"/>
    </source>
</evidence>
<evidence type="ECO:0000256" key="5">
    <source>
        <dbReference type="SAM" id="MobiDB-lite"/>
    </source>
</evidence>
<evidence type="ECO:0000269" key="6">
    <source>
    </source>
</evidence>
<evidence type="ECO:0000269" key="7">
    <source>
    </source>
</evidence>
<evidence type="ECO:0000269" key="8">
    <source>
    </source>
</evidence>
<evidence type="ECO:0000269" key="9">
    <source>
    </source>
</evidence>
<evidence type="ECO:0000305" key="10"/>
<evidence type="ECO:0000312" key="11">
    <source>
        <dbReference type="Proteomes" id="UP000001940"/>
    </source>
</evidence>
<evidence type="ECO:0000312" key="12">
    <source>
        <dbReference type="WormBase" id="F09E10.8"/>
    </source>
</evidence>
<comment type="function">
    <text evidence="6 7 8 9">Plays a role in protein trafficking, actin organization and embryonic morphogenesis (PubMed:19798448). Potentially acts as a cdc-42 effector (PubMed:25775511). May play a role in hypodermal P-cell nuclear positioning (PubMed:23150597). Together with toca-2, is required for protein trafficking regulating yolk protein clathrin-mediated endocytosis by oocytes during oogenesis and retrograde recycling and the sorting of recycling endosome cargo proteins such as mig-14 (PubMed:19798448, PubMed:25775511). Also, together with toca-2, controls the distribution of actin at cell junctions (PubMed:19798448, PubMed:26578656).</text>
</comment>
<comment type="subunit">
    <text evidence="6 8">Interacts (via SH3 domain) with wsp-1 (PubMed:19798448). Interacts with cdc-42 and (via SH3 domain) with wve-1 (PubMed:25775511).</text>
</comment>
<comment type="subcellular location">
    <subcellularLocation>
        <location evidence="6 7">Cell junction</location>
    </subcellularLocation>
    <subcellularLocation>
        <location evidence="6 8">Apical cell membrane</location>
        <topology evidence="6 8">Peripheral membrane protein</topology>
        <orientation evidence="6 8">Cytoplasmic side</orientation>
    </subcellularLocation>
    <subcellularLocation>
        <location evidence="6 8">Basolateral cell membrane</location>
        <topology evidence="6 8">Peripheral membrane protein</topology>
        <orientation evidence="6 8">Cytoplasmic side</orientation>
    </subcellularLocation>
    <subcellularLocation>
        <location evidence="6">Cytoplasmic vesicle</location>
    </subcellularLocation>
    <subcellularLocation>
        <location evidence="7 8">Cytoplasm</location>
    </subcellularLocation>
    <subcellularLocation>
        <location evidence="7">Cytoplasm</location>
        <location evidence="7">Perinuclear region</location>
    </subcellularLocation>
    <subcellularLocation>
        <location evidence="8">Recycling endosome</location>
    </subcellularLocation>
    <text evidence="6 8">Co-localizes with ajm-1 at cell junctions (PubMed:19798448). Co-localizes with toca-2, rme-1, cdc-42 and wve-1 on recycling endosomes (PubMed:25775511).</text>
</comment>
<comment type="tissue specificity">
    <text evidence="6">Expressed in the germline and specifically in the gonads.</text>
</comment>
<comment type="developmental stage">
    <text evidence="6">Ubiquitously expressed in developing embryos.</text>
</comment>
<comment type="disruption phenotype">
    <text evidence="6 7 8 9">Defective endocytosis by occytes characterized by either reduced or non-detectable yolk protein in the oocytes and by an accumulation of aggregated yolk in the pseudocoelomatic space (PubMed:19798448). This is more pronounced in the double knockout with toca-2 where nearly 100% of animals display this phenotype (PubMed:19798448). Double knockout mutants with toca-2 also produce 20% fewer eggs compared to wild-type animals and there is some embryonic lethality whereby the dying embryos display defective morphogenesis including failed epidermal enclosure with extruding gut cells and increased width of the intestinal lumen (PubMed:19798448). This perhaps results from failed intercalation and migration of hypodermal cells and irregular protein trafficking as indicated by an accumulation of the cell junction protein ajm-1 and diffuse localization of actin at cell junctions (PubMed:19798448, PubMed:26578656). These double mutants also demonstrate defective endosomal sorting of recycling cargo proteins such as mig-14 (PubMed:25775511). Double knockown with unc-84 results in defective hypodermal P-cell nuclear positioning with nuclei failing to migrate during larval development and a reduced number of GABA neurons (PubMed:23150597).</text>
</comment>
<comment type="similarity">
    <text evidence="10">Belongs to the FNBP1 family.</text>
</comment>